<feature type="chain" id="PRO_1000100337" description="Putative competence-damage inducible protein">
    <location>
        <begin position="1"/>
        <end position="418"/>
    </location>
</feature>
<accession>B2IM29</accession>
<comment type="similarity">
    <text evidence="1">Belongs to the CinA family.</text>
</comment>
<evidence type="ECO:0000255" key="1">
    <source>
        <dbReference type="HAMAP-Rule" id="MF_00226"/>
    </source>
</evidence>
<sequence>MKAEIIAVGTEILTGQIVNTNAQFLSEKLAEIGVDVYFQTAVGDNEVRLLSLLEIASQRSSLVILTGGLGPTEDDLTKQTLAKFLGKALVFDPQAQEKLDIFFALRPDYARTPNNERQAQIVEGAIPLPNETGLAVGGKLEVDGVTYVVLPGPPSELKPMVLNQLLPKLMTGSKLYSRVLRFFGIGESQLVTILADLIDNQIDPTLAPYAKTGEVTLRLSTKASSQEEANQALDILENQILDCQTFEGISLRDFCYGYGEETSLASIVVEELKRQGKTIAAAESLTAGLFQATVTNFSEVSSIFKSGFVTYSLEEKSRMLDIPAKNLEEHGVVSEFTAQKMAEQARSKTQSDFGISLTGVAGPDSLEGHPVGTVFIGLAQEQGTEVIKVNIGGRSRADVRHIAVMHAFNLVRKALLSD</sequence>
<dbReference type="EMBL" id="CP001033">
    <property type="protein sequence ID" value="ACB91167.1"/>
    <property type="molecule type" value="Genomic_DNA"/>
</dbReference>
<dbReference type="RefSeq" id="WP_000642711.1">
    <property type="nucleotide sequence ID" value="NC_010582.1"/>
</dbReference>
<dbReference type="SMR" id="B2IM29"/>
<dbReference type="KEGG" id="spw:SPCG_1914"/>
<dbReference type="HOGENOM" id="CLU_030805_9_3_9"/>
<dbReference type="CDD" id="cd00885">
    <property type="entry name" value="cinA"/>
    <property type="match status" value="1"/>
</dbReference>
<dbReference type="Gene3D" id="3.30.70.2860">
    <property type="match status" value="1"/>
</dbReference>
<dbReference type="Gene3D" id="3.90.950.20">
    <property type="entry name" value="CinA-like"/>
    <property type="match status" value="1"/>
</dbReference>
<dbReference type="Gene3D" id="3.40.980.10">
    <property type="entry name" value="MoaB/Mog-like domain"/>
    <property type="match status" value="1"/>
</dbReference>
<dbReference type="HAMAP" id="MF_00226_B">
    <property type="entry name" value="CinA_B"/>
    <property type="match status" value="1"/>
</dbReference>
<dbReference type="InterPro" id="IPR050101">
    <property type="entry name" value="CinA"/>
</dbReference>
<dbReference type="InterPro" id="IPR036653">
    <property type="entry name" value="CinA-like_C"/>
</dbReference>
<dbReference type="InterPro" id="IPR008136">
    <property type="entry name" value="CinA_C"/>
</dbReference>
<dbReference type="InterPro" id="IPR041424">
    <property type="entry name" value="CinA_KH"/>
</dbReference>
<dbReference type="InterPro" id="IPR008135">
    <property type="entry name" value="Competence-induced_CinA"/>
</dbReference>
<dbReference type="InterPro" id="IPR036425">
    <property type="entry name" value="MoaB/Mog-like_dom_sf"/>
</dbReference>
<dbReference type="InterPro" id="IPR001453">
    <property type="entry name" value="MoaB/Mog_dom"/>
</dbReference>
<dbReference type="NCBIfam" id="TIGR00200">
    <property type="entry name" value="cinA_nterm"/>
    <property type="match status" value="1"/>
</dbReference>
<dbReference type="NCBIfam" id="TIGR00199">
    <property type="entry name" value="PncC_domain"/>
    <property type="match status" value="1"/>
</dbReference>
<dbReference type="NCBIfam" id="NF001813">
    <property type="entry name" value="PRK00549.1"/>
    <property type="match status" value="1"/>
</dbReference>
<dbReference type="PANTHER" id="PTHR13939">
    <property type="entry name" value="NICOTINAMIDE-NUCLEOTIDE AMIDOHYDROLASE PNCC"/>
    <property type="match status" value="1"/>
</dbReference>
<dbReference type="PANTHER" id="PTHR13939:SF0">
    <property type="entry name" value="NMN AMIDOHYDROLASE-LIKE PROTEIN YFAY"/>
    <property type="match status" value="1"/>
</dbReference>
<dbReference type="Pfam" id="PF02464">
    <property type="entry name" value="CinA"/>
    <property type="match status" value="1"/>
</dbReference>
<dbReference type="Pfam" id="PF18146">
    <property type="entry name" value="CinA_KH"/>
    <property type="match status" value="1"/>
</dbReference>
<dbReference type="Pfam" id="PF00994">
    <property type="entry name" value="MoCF_biosynth"/>
    <property type="match status" value="1"/>
</dbReference>
<dbReference type="PIRSF" id="PIRSF006728">
    <property type="entry name" value="CinA"/>
    <property type="match status" value="1"/>
</dbReference>
<dbReference type="SMART" id="SM00852">
    <property type="entry name" value="MoCF_biosynth"/>
    <property type="match status" value="1"/>
</dbReference>
<dbReference type="SUPFAM" id="SSF142433">
    <property type="entry name" value="CinA-like"/>
    <property type="match status" value="1"/>
</dbReference>
<dbReference type="SUPFAM" id="SSF53218">
    <property type="entry name" value="Molybdenum cofactor biosynthesis proteins"/>
    <property type="match status" value="1"/>
</dbReference>
<proteinExistence type="inferred from homology"/>
<gene>
    <name evidence="1" type="primary">cinA</name>
    <name type="ordered locus">SPCG_1914</name>
</gene>
<organism>
    <name type="scientific">Streptococcus pneumoniae (strain CGSP14)</name>
    <dbReference type="NCBI Taxonomy" id="516950"/>
    <lineage>
        <taxon>Bacteria</taxon>
        <taxon>Bacillati</taxon>
        <taxon>Bacillota</taxon>
        <taxon>Bacilli</taxon>
        <taxon>Lactobacillales</taxon>
        <taxon>Streptococcaceae</taxon>
        <taxon>Streptococcus</taxon>
    </lineage>
</organism>
<name>CINA_STRPS</name>
<protein>
    <recommendedName>
        <fullName evidence="1">Putative competence-damage inducible protein</fullName>
    </recommendedName>
</protein>
<reference key="1">
    <citation type="journal article" date="2009" name="BMC Genomics">
        <title>Genome evolution driven by host adaptations results in a more virulent and antimicrobial-resistant Streptococcus pneumoniae serotype 14.</title>
        <authorList>
            <person name="Ding F."/>
            <person name="Tang P."/>
            <person name="Hsu M.-H."/>
            <person name="Cui P."/>
            <person name="Hu S."/>
            <person name="Yu J."/>
            <person name="Chiu C.-H."/>
        </authorList>
    </citation>
    <scope>NUCLEOTIDE SEQUENCE [LARGE SCALE GENOMIC DNA]</scope>
    <source>
        <strain>CGSP14</strain>
    </source>
</reference>